<evidence type="ECO:0000305" key="1"/>
<proteinExistence type="predicted"/>
<comment type="similarity">
    <text evidence="1">To M.jannaschii MJ1155.1.</text>
</comment>
<dbReference type="EMBL" id="AE000782">
    <property type="protein sequence ID" value="AAB89496.1"/>
    <property type="molecule type" value="Genomic_DNA"/>
</dbReference>
<dbReference type="PIR" id="A69469">
    <property type="entry name" value="A69469"/>
</dbReference>
<dbReference type="RefSeq" id="WP_010879250.1">
    <property type="nucleotide sequence ID" value="NC_000917.1"/>
</dbReference>
<dbReference type="STRING" id="224325.AF_1754"/>
<dbReference type="PaxDb" id="224325-AF_1754"/>
<dbReference type="EnsemblBacteria" id="AAB89496">
    <property type="protein sequence ID" value="AAB89496"/>
    <property type="gene ID" value="AF_1754"/>
</dbReference>
<dbReference type="KEGG" id="afu:AF_1754"/>
<dbReference type="eggNOG" id="arCOG07899">
    <property type="taxonomic scope" value="Archaea"/>
</dbReference>
<dbReference type="HOGENOM" id="CLU_172997_0_0_2"/>
<dbReference type="OrthoDB" id="65983at2157"/>
<dbReference type="Proteomes" id="UP000002199">
    <property type="component" value="Chromosome"/>
</dbReference>
<dbReference type="InterPro" id="IPR008407">
    <property type="entry name" value="Brnchd-chn_aa_trnsp_AzlD"/>
</dbReference>
<dbReference type="Pfam" id="PF05437">
    <property type="entry name" value="AzlD"/>
    <property type="match status" value="1"/>
</dbReference>
<sequence>MVSEKVLAIIAVALGTYLARFLPLKIKFATSDKIKSFLSLSSTSVISALFVTSVFTPDAAEFGVRVAALFPLILSFYRWRNFGLSIFAAVLSYYLLRLAV</sequence>
<name>YH74_ARCFU</name>
<feature type="chain" id="PRO_0000107194" description="Uncharacterized protein AF_1754">
    <location>
        <begin position="1"/>
        <end position="100"/>
    </location>
</feature>
<keyword id="KW-1185">Reference proteome</keyword>
<protein>
    <recommendedName>
        <fullName>Uncharacterized protein AF_1754</fullName>
    </recommendedName>
</protein>
<accession>O28520</accession>
<organism>
    <name type="scientific">Archaeoglobus fulgidus (strain ATCC 49558 / DSM 4304 / JCM 9628 / NBRC 100126 / VC-16)</name>
    <dbReference type="NCBI Taxonomy" id="224325"/>
    <lineage>
        <taxon>Archaea</taxon>
        <taxon>Methanobacteriati</taxon>
        <taxon>Methanobacteriota</taxon>
        <taxon>Archaeoglobi</taxon>
        <taxon>Archaeoglobales</taxon>
        <taxon>Archaeoglobaceae</taxon>
        <taxon>Archaeoglobus</taxon>
    </lineage>
</organism>
<reference key="1">
    <citation type="journal article" date="1997" name="Nature">
        <title>The complete genome sequence of the hyperthermophilic, sulphate-reducing archaeon Archaeoglobus fulgidus.</title>
        <authorList>
            <person name="Klenk H.-P."/>
            <person name="Clayton R.A."/>
            <person name="Tomb J.-F."/>
            <person name="White O."/>
            <person name="Nelson K.E."/>
            <person name="Ketchum K.A."/>
            <person name="Dodson R.J."/>
            <person name="Gwinn M.L."/>
            <person name="Hickey E.K."/>
            <person name="Peterson J.D."/>
            <person name="Richardson D.L."/>
            <person name="Kerlavage A.R."/>
            <person name="Graham D.E."/>
            <person name="Kyrpides N.C."/>
            <person name="Fleischmann R.D."/>
            <person name="Quackenbush J."/>
            <person name="Lee N.H."/>
            <person name="Sutton G.G."/>
            <person name="Gill S.R."/>
            <person name="Kirkness E.F."/>
            <person name="Dougherty B.A."/>
            <person name="McKenney K."/>
            <person name="Adams M.D."/>
            <person name="Loftus B.J."/>
            <person name="Peterson S.N."/>
            <person name="Reich C.I."/>
            <person name="McNeil L.K."/>
            <person name="Badger J.H."/>
            <person name="Glodek A."/>
            <person name="Zhou L."/>
            <person name="Overbeek R."/>
            <person name="Gocayne J.D."/>
            <person name="Weidman J.F."/>
            <person name="McDonald L.A."/>
            <person name="Utterback T.R."/>
            <person name="Cotton M.D."/>
            <person name="Spriggs T."/>
            <person name="Artiach P."/>
            <person name="Kaine B.P."/>
            <person name="Sykes S.M."/>
            <person name="Sadow P.W."/>
            <person name="D'Andrea K.P."/>
            <person name="Bowman C."/>
            <person name="Fujii C."/>
            <person name="Garland S.A."/>
            <person name="Mason T.M."/>
            <person name="Olsen G.J."/>
            <person name="Fraser C.M."/>
            <person name="Smith H.O."/>
            <person name="Woese C.R."/>
            <person name="Venter J.C."/>
        </authorList>
    </citation>
    <scope>NUCLEOTIDE SEQUENCE [LARGE SCALE GENOMIC DNA]</scope>
    <source>
        <strain>ATCC 49558 / DSM 4304 / JCM 9628 / NBRC 100126 / VC-16</strain>
    </source>
</reference>
<gene>
    <name type="ordered locus">AF_1754</name>
</gene>